<proteinExistence type="inferred from homology"/>
<name>MIAB_FLAJ1</name>
<protein>
    <recommendedName>
        <fullName evidence="1">tRNA-2-methylthio-N(6)-dimethylallyladenosine synthase</fullName>
        <ecNumber evidence="1">2.8.4.3</ecNumber>
    </recommendedName>
    <alternativeName>
        <fullName evidence="1">(Dimethylallyl)adenosine tRNA methylthiotransferase MiaB</fullName>
    </alternativeName>
    <alternativeName>
        <fullName evidence="1">tRNA-i(6)A37 methylthiotransferase</fullName>
    </alternativeName>
</protein>
<accession>A5FIU2</accession>
<evidence type="ECO:0000255" key="1">
    <source>
        <dbReference type="HAMAP-Rule" id="MF_01864"/>
    </source>
</evidence>
<evidence type="ECO:0000255" key="2">
    <source>
        <dbReference type="PROSITE-ProRule" id="PRU01266"/>
    </source>
</evidence>
<organism>
    <name type="scientific">Flavobacterium johnsoniae (strain ATCC 17061 / DSM 2064 / JCM 8514 / BCRC 14874 / CCUG 350202 / NBRC 14942 / NCIMB 11054 / UW101)</name>
    <name type="common">Cytophaga johnsonae</name>
    <dbReference type="NCBI Taxonomy" id="376686"/>
    <lineage>
        <taxon>Bacteria</taxon>
        <taxon>Pseudomonadati</taxon>
        <taxon>Bacteroidota</taxon>
        <taxon>Flavobacteriia</taxon>
        <taxon>Flavobacteriales</taxon>
        <taxon>Flavobacteriaceae</taxon>
        <taxon>Flavobacterium</taxon>
    </lineage>
</organism>
<comment type="function">
    <text evidence="1">Catalyzes the methylthiolation of N6-(dimethylallyl)adenosine (i(6)A), leading to the formation of 2-methylthio-N6-(dimethylallyl)adenosine (ms(2)i(6)A) at position 37 in tRNAs that read codons beginning with uridine.</text>
</comment>
<comment type="catalytic activity">
    <reaction evidence="1">
        <text>N(6)-dimethylallyladenosine(37) in tRNA + (sulfur carrier)-SH + AH2 + 2 S-adenosyl-L-methionine = 2-methylsulfanyl-N(6)-dimethylallyladenosine(37) in tRNA + (sulfur carrier)-H + 5'-deoxyadenosine + L-methionine + A + S-adenosyl-L-homocysteine + 2 H(+)</text>
        <dbReference type="Rhea" id="RHEA:37067"/>
        <dbReference type="Rhea" id="RHEA-COMP:10375"/>
        <dbReference type="Rhea" id="RHEA-COMP:10376"/>
        <dbReference type="Rhea" id="RHEA-COMP:14737"/>
        <dbReference type="Rhea" id="RHEA-COMP:14739"/>
        <dbReference type="ChEBI" id="CHEBI:13193"/>
        <dbReference type="ChEBI" id="CHEBI:15378"/>
        <dbReference type="ChEBI" id="CHEBI:17319"/>
        <dbReference type="ChEBI" id="CHEBI:17499"/>
        <dbReference type="ChEBI" id="CHEBI:29917"/>
        <dbReference type="ChEBI" id="CHEBI:57844"/>
        <dbReference type="ChEBI" id="CHEBI:57856"/>
        <dbReference type="ChEBI" id="CHEBI:59789"/>
        <dbReference type="ChEBI" id="CHEBI:64428"/>
        <dbReference type="ChEBI" id="CHEBI:74415"/>
        <dbReference type="ChEBI" id="CHEBI:74417"/>
        <dbReference type="EC" id="2.8.4.3"/>
    </reaction>
</comment>
<comment type="cofactor">
    <cofactor evidence="1">
        <name>[4Fe-4S] cluster</name>
        <dbReference type="ChEBI" id="CHEBI:49883"/>
    </cofactor>
    <text evidence="1">Binds 2 [4Fe-4S] clusters. One cluster is coordinated with 3 cysteines and an exchangeable S-adenosyl-L-methionine.</text>
</comment>
<comment type="subunit">
    <text evidence="1">Monomer.</text>
</comment>
<comment type="subcellular location">
    <subcellularLocation>
        <location evidence="1">Cytoplasm</location>
    </subcellularLocation>
</comment>
<comment type="similarity">
    <text evidence="1">Belongs to the methylthiotransferase family. MiaB subfamily.</text>
</comment>
<gene>
    <name evidence="1" type="primary">miaB</name>
    <name type="ordered locus">Fjoh_1850</name>
</gene>
<reference key="1">
    <citation type="journal article" date="2009" name="Appl. Environ. Microbiol.">
        <title>Novel features of the polysaccharide-digesting gliding bacterium Flavobacterium johnsoniae as revealed by genome sequence analysis.</title>
        <authorList>
            <person name="McBride M.J."/>
            <person name="Xie G."/>
            <person name="Martens E.C."/>
            <person name="Lapidus A."/>
            <person name="Henrissat B."/>
            <person name="Rhodes R.G."/>
            <person name="Goltsman E."/>
            <person name="Wang W."/>
            <person name="Xu J."/>
            <person name="Hunnicutt D.W."/>
            <person name="Staroscik A.M."/>
            <person name="Hoover T.R."/>
            <person name="Cheng Y.Q."/>
            <person name="Stein J.L."/>
        </authorList>
    </citation>
    <scope>NUCLEOTIDE SEQUENCE [LARGE SCALE GENOMIC DNA]</scope>
    <source>
        <strain>ATCC 17061 / DSM 2064 / JCM 8514 / BCRC 14874 / CCUG 350202 / NBRC 14942 / NCIMB 11054 / UW101</strain>
    </source>
</reference>
<feature type="chain" id="PRO_0000374300" description="tRNA-2-methylthio-N(6)-dimethylallyladenosine synthase">
    <location>
        <begin position="1"/>
        <end position="481"/>
    </location>
</feature>
<feature type="domain" description="MTTase N-terminal" evidence="1">
    <location>
        <begin position="24"/>
        <end position="140"/>
    </location>
</feature>
<feature type="domain" description="Radical SAM core" evidence="2">
    <location>
        <begin position="164"/>
        <end position="411"/>
    </location>
</feature>
<feature type="domain" description="TRAM" evidence="1">
    <location>
        <begin position="413"/>
        <end position="476"/>
    </location>
</feature>
<feature type="binding site" evidence="1">
    <location>
        <position position="33"/>
    </location>
    <ligand>
        <name>[4Fe-4S] cluster</name>
        <dbReference type="ChEBI" id="CHEBI:49883"/>
        <label>1</label>
    </ligand>
</feature>
<feature type="binding site" evidence="1">
    <location>
        <position position="69"/>
    </location>
    <ligand>
        <name>[4Fe-4S] cluster</name>
        <dbReference type="ChEBI" id="CHEBI:49883"/>
        <label>1</label>
    </ligand>
</feature>
<feature type="binding site" evidence="1">
    <location>
        <position position="103"/>
    </location>
    <ligand>
        <name>[4Fe-4S] cluster</name>
        <dbReference type="ChEBI" id="CHEBI:49883"/>
        <label>1</label>
    </ligand>
</feature>
<feature type="binding site" evidence="1">
    <location>
        <position position="178"/>
    </location>
    <ligand>
        <name>[4Fe-4S] cluster</name>
        <dbReference type="ChEBI" id="CHEBI:49883"/>
        <label>2</label>
        <note>4Fe-4S-S-AdoMet</note>
    </ligand>
</feature>
<feature type="binding site" evidence="1">
    <location>
        <position position="182"/>
    </location>
    <ligand>
        <name>[4Fe-4S] cluster</name>
        <dbReference type="ChEBI" id="CHEBI:49883"/>
        <label>2</label>
        <note>4Fe-4S-S-AdoMet</note>
    </ligand>
</feature>
<feature type="binding site" evidence="1">
    <location>
        <position position="185"/>
    </location>
    <ligand>
        <name>[4Fe-4S] cluster</name>
        <dbReference type="ChEBI" id="CHEBI:49883"/>
        <label>2</label>
        <note>4Fe-4S-S-AdoMet</note>
    </ligand>
</feature>
<sequence>MEKIIEESKQGESLVLENKPENTKKLFIESYGCAMNFSDSEVVASILSDGGYNTTSVLEEADLVLVNTCSIRDKAEQTIRKRLEKYNAVKRTNPKMKVGVLGCMAERLKSQFLEEEKIVDLVVGPDAYKDLPNLLAEVEEGRDAINVILSKEETYGDISPVRLMSNGITALVSITRGCDNMCTFCVVPFTRGRERSREPQSIMAEIQDLWSKGFKEITLLGQNVDSYLWYGGGLKKDFVNASEMQKATAVDFDQLLEMVAVGFPKMRIRFSTSNPQDMHESILHVMAKYPNICKHIHLPVQSGSNRILKEMNRLHSREEYMALIDKIRAIVPDASISQDMIAGFPTETEQDHQDTMSLMEYVKYNFGYMYSYSERPGTLAGRKMKDDVEEETKARRLQEIVDLQQKHAWFRSEEFVGKTVEVLVEKVSKKSKDEFSGRNSQSITVVFPKENYKIGDFVNVKITSCTSGTLKGEAVGLSSMN</sequence>
<dbReference type="EC" id="2.8.4.3" evidence="1"/>
<dbReference type="EMBL" id="CP000685">
    <property type="protein sequence ID" value="ABQ04882.1"/>
    <property type="molecule type" value="Genomic_DNA"/>
</dbReference>
<dbReference type="RefSeq" id="WP_012023926.1">
    <property type="nucleotide sequence ID" value="NC_009441.1"/>
</dbReference>
<dbReference type="SMR" id="A5FIU2"/>
<dbReference type="STRING" id="376686.Fjoh_1850"/>
<dbReference type="KEGG" id="fjo:Fjoh_1850"/>
<dbReference type="eggNOG" id="COG0621">
    <property type="taxonomic scope" value="Bacteria"/>
</dbReference>
<dbReference type="HOGENOM" id="CLU_018697_2_1_10"/>
<dbReference type="OrthoDB" id="9805215at2"/>
<dbReference type="Proteomes" id="UP000006694">
    <property type="component" value="Chromosome"/>
</dbReference>
<dbReference type="GO" id="GO:0005829">
    <property type="term" value="C:cytosol"/>
    <property type="evidence" value="ECO:0007669"/>
    <property type="project" value="TreeGrafter"/>
</dbReference>
<dbReference type="GO" id="GO:0051539">
    <property type="term" value="F:4 iron, 4 sulfur cluster binding"/>
    <property type="evidence" value="ECO:0007669"/>
    <property type="project" value="UniProtKB-UniRule"/>
</dbReference>
<dbReference type="GO" id="GO:0046872">
    <property type="term" value="F:metal ion binding"/>
    <property type="evidence" value="ECO:0007669"/>
    <property type="project" value="UniProtKB-KW"/>
</dbReference>
<dbReference type="GO" id="GO:0035597">
    <property type="term" value="F:N6-isopentenyladenosine methylthiotransferase activity"/>
    <property type="evidence" value="ECO:0007669"/>
    <property type="project" value="TreeGrafter"/>
</dbReference>
<dbReference type="CDD" id="cd01335">
    <property type="entry name" value="Radical_SAM"/>
    <property type="match status" value="1"/>
</dbReference>
<dbReference type="FunFam" id="3.40.50.12160:FF:000003">
    <property type="entry name" value="CDK5 regulatory subunit-associated protein 1"/>
    <property type="match status" value="1"/>
</dbReference>
<dbReference type="FunFam" id="3.80.30.20:FF:000001">
    <property type="entry name" value="tRNA-2-methylthio-N(6)-dimethylallyladenosine synthase 2"/>
    <property type="match status" value="1"/>
</dbReference>
<dbReference type="Gene3D" id="3.40.50.12160">
    <property type="entry name" value="Methylthiotransferase, N-terminal domain"/>
    <property type="match status" value="1"/>
</dbReference>
<dbReference type="Gene3D" id="3.80.30.20">
    <property type="entry name" value="tm_1862 like domain"/>
    <property type="match status" value="1"/>
</dbReference>
<dbReference type="HAMAP" id="MF_01864">
    <property type="entry name" value="tRNA_metthiotr_MiaB"/>
    <property type="match status" value="1"/>
</dbReference>
<dbReference type="InterPro" id="IPR006638">
    <property type="entry name" value="Elp3/MiaA/NifB-like_rSAM"/>
</dbReference>
<dbReference type="InterPro" id="IPR005839">
    <property type="entry name" value="Methylthiotransferase"/>
</dbReference>
<dbReference type="InterPro" id="IPR020612">
    <property type="entry name" value="Methylthiotransferase_CS"/>
</dbReference>
<dbReference type="InterPro" id="IPR013848">
    <property type="entry name" value="Methylthiotransferase_N"/>
</dbReference>
<dbReference type="InterPro" id="IPR038135">
    <property type="entry name" value="Methylthiotransferase_N_sf"/>
</dbReference>
<dbReference type="InterPro" id="IPR006463">
    <property type="entry name" value="MiaB_methiolase"/>
</dbReference>
<dbReference type="InterPro" id="IPR007197">
    <property type="entry name" value="rSAM"/>
</dbReference>
<dbReference type="InterPro" id="IPR023404">
    <property type="entry name" value="rSAM_horseshoe"/>
</dbReference>
<dbReference type="InterPro" id="IPR002792">
    <property type="entry name" value="TRAM_dom"/>
</dbReference>
<dbReference type="NCBIfam" id="TIGR01574">
    <property type="entry name" value="miaB-methiolase"/>
    <property type="match status" value="1"/>
</dbReference>
<dbReference type="NCBIfam" id="TIGR00089">
    <property type="entry name" value="MiaB/RimO family radical SAM methylthiotransferase"/>
    <property type="match status" value="1"/>
</dbReference>
<dbReference type="PANTHER" id="PTHR43020">
    <property type="entry name" value="CDK5 REGULATORY SUBUNIT-ASSOCIATED PROTEIN 1"/>
    <property type="match status" value="1"/>
</dbReference>
<dbReference type="PANTHER" id="PTHR43020:SF2">
    <property type="entry name" value="MITOCHONDRIAL TRNA METHYLTHIOTRANSFERASE CDK5RAP1"/>
    <property type="match status" value="1"/>
</dbReference>
<dbReference type="Pfam" id="PF04055">
    <property type="entry name" value="Radical_SAM"/>
    <property type="match status" value="1"/>
</dbReference>
<dbReference type="Pfam" id="PF01938">
    <property type="entry name" value="TRAM"/>
    <property type="match status" value="1"/>
</dbReference>
<dbReference type="Pfam" id="PF00919">
    <property type="entry name" value="UPF0004"/>
    <property type="match status" value="1"/>
</dbReference>
<dbReference type="SFLD" id="SFLDF00273">
    <property type="entry name" value="(dimethylallyl)adenosine_tRNA"/>
    <property type="match status" value="1"/>
</dbReference>
<dbReference type="SFLD" id="SFLDG01082">
    <property type="entry name" value="B12-binding_domain_containing"/>
    <property type="match status" value="1"/>
</dbReference>
<dbReference type="SFLD" id="SFLDF00413">
    <property type="entry name" value="CDK5RAP1"/>
    <property type="match status" value="1"/>
</dbReference>
<dbReference type="SFLD" id="SFLDS00029">
    <property type="entry name" value="Radical_SAM"/>
    <property type="match status" value="1"/>
</dbReference>
<dbReference type="SMART" id="SM00729">
    <property type="entry name" value="Elp3"/>
    <property type="match status" value="1"/>
</dbReference>
<dbReference type="SUPFAM" id="SSF102114">
    <property type="entry name" value="Radical SAM enzymes"/>
    <property type="match status" value="1"/>
</dbReference>
<dbReference type="PROSITE" id="PS51449">
    <property type="entry name" value="MTTASE_N"/>
    <property type="match status" value="1"/>
</dbReference>
<dbReference type="PROSITE" id="PS01278">
    <property type="entry name" value="MTTASE_RADICAL"/>
    <property type="match status" value="1"/>
</dbReference>
<dbReference type="PROSITE" id="PS51918">
    <property type="entry name" value="RADICAL_SAM"/>
    <property type="match status" value="1"/>
</dbReference>
<dbReference type="PROSITE" id="PS50926">
    <property type="entry name" value="TRAM"/>
    <property type="match status" value="1"/>
</dbReference>
<keyword id="KW-0004">4Fe-4S</keyword>
<keyword id="KW-0963">Cytoplasm</keyword>
<keyword id="KW-0408">Iron</keyword>
<keyword id="KW-0411">Iron-sulfur</keyword>
<keyword id="KW-0479">Metal-binding</keyword>
<keyword id="KW-0949">S-adenosyl-L-methionine</keyword>
<keyword id="KW-0808">Transferase</keyword>
<keyword id="KW-0819">tRNA processing</keyword>